<name>DBP5_YARLI</name>
<organism>
    <name type="scientific">Yarrowia lipolytica (strain CLIB 122 / E 150)</name>
    <name type="common">Yeast</name>
    <name type="synonym">Candida lipolytica</name>
    <dbReference type="NCBI Taxonomy" id="284591"/>
    <lineage>
        <taxon>Eukaryota</taxon>
        <taxon>Fungi</taxon>
        <taxon>Dikarya</taxon>
        <taxon>Ascomycota</taxon>
        <taxon>Saccharomycotina</taxon>
        <taxon>Dipodascomycetes</taxon>
        <taxon>Dipodascales</taxon>
        <taxon>Dipodascales incertae sedis</taxon>
        <taxon>Yarrowia</taxon>
    </lineage>
</organism>
<gene>
    <name type="primary">DBP5</name>
    <name type="ordered locus">YALI0E31427g</name>
</gene>
<accession>Q6C3X7</accession>
<feature type="chain" id="PRO_0000232228" description="ATP-dependent RNA helicase DBP5">
    <location>
        <begin position="1"/>
        <end position="488"/>
    </location>
</feature>
<feature type="domain" description="Helicase ATP-binding" evidence="2">
    <location>
        <begin position="132"/>
        <end position="298"/>
    </location>
</feature>
<feature type="domain" description="Helicase C-terminal" evidence="3">
    <location>
        <begin position="326"/>
        <end position="477"/>
    </location>
</feature>
<feature type="region of interest" description="Disordered" evidence="4">
    <location>
        <begin position="1"/>
        <end position="73"/>
    </location>
</feature>
<feature type="short sequence motif" description="Q motif">
    <location>
        <begin position="99"/>
        <end position="127"/>
    </location>
</feature>
<feature type="short sequence motif" description="DEAD box">
    <location>
        <begin position="246"/>
        <end position="249"/>
    </location>
</feature>
<feature type="compositionally biased region" description="Basic and acidic residues" evidence="4">
    <location>
        <begin position="8"/>
        <end position="19"/>
    </location>
</feature>
<feature type="compositionally biased region" description="Basic and acidic residues" evidence="4">
    <location>
        <begin position="26"/>
        <end position="64"/>
    </location>
</feature>
<feature type="binding site" evidence="2">
    <location>
        <begin position="145"/>
        <end position="152"/>
    </location>
    <ligand>
        <name>ATP</name>
        <dbReference type="ChEBI" id="CHEBI:30616"/>
    </ligand>
</feature>
<comment type="function">
    <text evidence="1">ATP-dependent RNA helicase associated with the nuclear pore complex and essential for mRNA export from the nucleus. May participate in a terminal step of mRNA export through the removal of proteins that accompany mRNA through the nucleopore complex. May also be involved in early transcription (By similarity).</text>
</comment>
<comment type="catalytic activity">
    <reaction>
        <text>ATP + H2O = ADP + phosphate + H(+)</text>
        <dbReference type="Rhea" id="RHEA:13065"/>
        <dbReference type="ChEBI" id="CHEBI:15377"/>
        <dbReference type="ChEBI" id="CHEBI:15378"/>
        <dbReference type="ChEBI" id="CHEBI:30616"/>
        <dbReference type="ChEBI" id="CHEBI:43474"/>
        <dbReference type="ChEBI" id="CHEBI:456216"/>
        <dbReference type="EC" id="3.6.4.13"/>
    </reaction>
</comment>
<comment type="subunit">
    <text evidence="1">Associates with the nuclear pore complex.</text>
</comment>
<comment type="subcellular location">
    <subcellularLocation>
        <location evidence="1">Cytoplasm</location>
    </subcellularLocation>
    <subcellularLocation>
        <location>Nucleus</location>
        <location>Nuclear pore complex</location>
    </subcellularLocation>
    <subcellularLocation>
        <location evidence="1">Nucleus membrane</location>
        <topology evidence="1">Peripheral membrane protein</topology>
        <orientation evidence="1">Cytoplasmic side</orientation>
    </subcellularLocation>
    <text evidence="1">Nuclear pore complex cytoplasmic fibrils.</text>
</comment>
<comment type="domain">
    <text>The Q motif is unique to and characteristic of the DEAD box family of RNA helicases and controls ATP binding and hydrolysis.</text>
</comment>
<comment type="similarity">
    <text evidence="5">Belongs to the DEAD box helicase family. DDX19/DBP5 subfamily.</text>
</comment>
<protein>
    <recommendedName>
        <fullName>ATP-dependent RNA helicase DBP5</fullName>
        <ecNumber>3.6.4.13</ecNumber>
    </recommendedName>
</protein>
<evidence type="ECO:0000250" key="1"/>
<evidence type="ECO:0000255" key="2">
    <source>
        <dbReference type="PROSITE-ProRule" id="PRU00541"/>
    </source>
</evidence>
<evidence type="ECO:0000255" key="3">
    <source>
        <dbReference type="PROSITE-ProRule" id="PRU00542"/>
    </source>
</evidence>
<evidence type="ECO:0000256" key="4">
    <source>
        <dbReference type="SAM" id="MobiDB-lite"/>
    </source>
</evidence>
<evidence type="ECO:0000305" key="5"/>
<keyword id="KW-0067">ATP-binding</keyword>
<keyword id="KW-0963">Cytoplasm</keyword>
<keyword id="KW-0347">Helicase</keyword>
<keyword id="KW-0378">Hydrolase</keyword>
<keyword id="KW-0472">Membrane</keyword>
<keyword id="KW-0509">mRNA transport</keyword>
<keyword id="KW-0906">Nuclear pore complex</keyword>
<keyword id="KW-0547">Nucleotide-binding</keyword>
<keyword id="KW-0539">Nucleus</keyword>
<keyword id="KW-0653">Protein transport</keyword>
<keyword id="KW-1185">Reference proteome</keyword>
<keyword id="KW-0694">RNA-binding</keyword>
<keyword id="KW-0811">Translocation</keyword>
<keyword id="KW-0813">Transport</keyword>
<dbReference type="EC" id="3.6.4.13"/>
<dbReference type="EMBL" id="CR382131">
    <property type="protein sequence ID" value="CAG80239.1"/>
    <property type="molecule type" value="Genomic_DNA"/>
</dbReference>
<dbReference type="RefSeq" id="XP_504635.1">
    <property type="nucleotide sequence ID" value="XM_504635.1"/>
</dbReference>
<dbReference type="SMR" id="Q6C3X7"/>
<dbReference type="FunCoup" id="Q6C3X7">
    <property type="interactions" value="794"/>
</dbReference>
<dbReference type="STRING" id="284591.Q6C3X7"/>
<dbReference type="EnsemblFungi" id="CAG80239">
    <property type="protein sequence ID" value="CAG80239"/>
    <property type="gene ID" value="YALI0_E31427g"/>
</dbReference>
<dbReference type="KEGG" id="yli:2911469"/>
<dbReference type="VEuPathDB" id="FungiDB:YALI0_E31427g"/>
<dbReference type="HOGENOM" id="CLU_003041_1_0_1"/>
<dbReference type="InParanoid" id="Q6C3X7"/>
<dbReference type="OMA" id="IAAETRW"/>
<dbReference type="OrthoDB" id="22198at4891"/>
<dbReference type="Proteomes" id="UP000001300">
    <property type="component" value="Chromosome E"/>
</dbReference>
<dbReference type="GO" id="GO:0010494">
    <property type="term" value="C:cytoplasmic stress granule"/>
    <property type="evidence" value="ECO:0000318"/>
    <property type="project" value="GO_Central"/>
</dbReference>
<dbReference type="GO" id="GO:0031965">
    <property type="term" value="C:nuclear membrane"/>
    <property type="evidence" value="ECO:0007669"/>
    <property type="project" value="UniProtKB-SubCell"/>
</dbReference>
<dbReference type="GO" id="GO:0005643">
    <property type="term" value="C:nuclear pore"/>
    <property type="evidence" value="ECO:0007669"/>
    <property type="project" value="UniProtKB-SubCell"/>
</dbReference>
<dbReference type="GO" id="GO:0005634">
    <property type="term" value="C:nucleus"/>
    <property type="evidence" value="ECO:0000318"/>
    <property type="project" value="GO_Central"/>
</dbReference>
<dbReference type="GO" id="GO:0005524">
    <property type="term" value="F:ATP binding"/>
    <property type="evidence" value="ECO:0007669"/>
    <property type="project" value="UniProtKB-KW"/>
</dbReference>
<dbReference type="GO" id="GO:0016887">
    <property type="term" value="F:ATP hydrolysis activity"/>
    <property type="evidence" value="ECO:0007669"/>
    <property type="project" value="RHEA"/>
</dbReference>
<dbReference type="GO" id="GO:0003729">
    <property type="term" value="F:mRNA binding"/>
    <property type="evidence" value="ECO:0000318"/>
    <property type="project" value="GO_Central"/>
</dbReference>
<dbReference type="GO" id="GO:0003724">
    <property type="term" value="F:RNA helicase activity"/>
    <property type="evidence" value="ECO:0000318"/>
    <property type="project" value="GO_Central"/>
</dbReference>
<dbReference type="GO" id="GO:0016973">
    <property type="term" value="P:poly(A)+ mRNA export from nucleus"/>
    <property type="evidence" value="ECO:0000318"/>
    <property type="project" value="GO_Central"/>
</dbReference>
<dbReference type="GO" id="GO:0015031">
    <property type="term" value="P:protein transport"/>
    <property type="evidence" value="ECO:0007669"/>
    <property type="project" value="UniProtKB-KW"/>
</dbReference>
<dbReference type="CDD" id="cd17963">
    <property type="entry name" value="DEADc_DDX19_DDX25"/>
    <property type="match status" value="1"/>
</dbReference>
<dbReference type="CDD" id="cd18787">
    <property type="entry name" value="SF2_C_DEAD"/>
    <property type="match status" value="1"/>
</dbReference>
<dbReference type="FunFam" id="3.40.50.300:FF:000849">
    <property type="entry name" value="ATP-dependent RNA helicase DBP5"/>
    <property type="match status" value="1"/>
</dbReference>
<dbReference type="Gene3D" id="3.40.50.300">
    <property type="entry name" value="P-loop containing nucleotide triphosphate hydrolases"/>
    <property type="match status" value="2"/>
</dbReference>
<dbReference type="InterPro" id="IPR011545">
    <property type="entry name" value="DEAD/DEAH_box_helicase_dom"/>
</dbReference>
<dbReference type="InterPro" id="IPR014001">
    <property type="entry name" value="Helicase_ATP-bd"/>
</dbReference>
<dbReference type="InterPro" id="IPR001650">
    <property type="entry name" value="Helicase_C-like"/>
</dbReference>
<dbReference type="InterPro" id="IPR027417">
    <property type="entry name" value="P-loop_NTPase"/>
</dbReference>
<dbReference type="InterPro" id="IPR000629">
    <property type="entry name" value="RNA-helicase_DEAD-box_CS"/>
</dbReference>
<dbReference type="InterPro" id="IPR014014">
    <property type="entry name" value="RNA_helicase_DEAD_Q_motif"/>
</dbReference>
<dbReference type="PANTHER" id="PTHR47958">
    <property type="entry name" value="ATP-DEPENDENT RNA HELICASE DBP3"/>
    <property type="match status" value="1"/>
</dbReference>
<dbReference type="Pfam" id="PF00270">
    <property type="entry name" value="DEAD"/>
    <property type="match status" value="1"/>
</dbReference>
<dbReference type="Pfam" id="PF00271">
    <property type="entry name" value="Helicase_C"/>
    <property type="match status" value="1"/>
</dbReference>
<dbReference type="SMART" id="SM00487">
    <property type="entry name" value="DEXDc"/>
    <property type="match status" value="1"/>
</dbReference>
<dbReference type="SMART" id="SM00490">
    <property type="entry name" value="HELICc"/>
    <property type="match status" value="1"/>
</dbReference>
<dbReference type="SUPFAM" id="SSF52540">
    <property type="entry name" value="P-loop containing nucleoside triphosphate hydrolases"/>
    <property type="match status" value="1"/>
</dbReference>
<dbReference type="PROSITE" id="PS00039">
    <property type="entry name" value="DEAD_ATP_HELICASE"/>
    <property type="match status" value="1"/>
</dbReference>
<dbReference type="PROSITE" id="PS51192">
    <property type="entry name" value="HELICASE_ATP_BIND_1"/>
    <property type="match status" value="1"/>
</dbReference>
<dbReference type="PROSITE" id="PS51194">
    <property type="entry name" value="HELICASE_CTER"/>
    <property type="match status" value="1"/>
</dbReference>
<dbReference type="PROSITE" id="PS51195">
    <property type="entry name" value="Q_MOTIF"/>
    <property type="match status" value="1"/>
</dbReference>
<reference key="1">
    <citation type="journal article" date="2004" name="Nature">
        <title>Genome evolution in yeasts.</title>
        <authorList>
            <person name="Dujon B."/>
            <person name="Sherman D."/>
            <person name="Fischer G."/>
            <person name="Durrens P."/>
            <person name="Casaregola S."/>
            <person name="Lafontaine I."/>
            <person name="de Montigny J."/>
            <person name="Marck C."/>
            <person name="Neuveglise C."/>
            <person name="Talla E."/>
            <person name="Goffard N."/>
            <person name="Frangeul L."/>
            <person name="Aigle M."/>
            <person name="Anthouard V."/>
            <person name="Babour A."/>
            <person name="Barbe V."/>
            <person name="Barnay S."/>
            <person name="Blanchin S."/>
            <person name="Beckerich J.-M."/>
            <person name="Beyne E."/>
            <person name="Bleykasten C."/>
            <person name="Boisrame A."/>
            <person name="Boyer J."/>
            <person name="Cattolico L."/>
            <person name="Confanioleri F."/>
            <person name="de Daruvar A."/>
            <person name="Despons L."/>
            <person name="Fabre E."/>
            <person name="Fairhead C."/>
            <person name="Ferry-Dumazet H."/>
            <person name="Groppi A."/>
            <person name="Hantraye F."/>
            <person name="Hennequin C."/>
            <person name="Jauniaux N."/>
            <person name="Joyet P."/>
            <person name="Kachouri R."/>
            <person name="Kerrest A."/>
            <person name="Koszul R."/>
            <person name="Lemaire M."/>
            <person name="Lesur I."/>
            <person name="Ma L."/>
            <person name="Muller H."/>
            <person name="Nicaud J.-M."/>
            <person name="Nikolski M."/>
            <person name="Oztas S."/>
            <person name="Ozier-Kalogeropoulos O."/>
            <person name="Pellenz S."/>
            <person name="Potier S."/>
            <person name="Richard G.-F."/>
            <person name="Straub M.-L."/>
            <person name="Suleau A."/>
            <person name="Swennen D."/>
            <person name="Tekaia F."/>
            <person name="Wesolowski-Louvel M."/>
            <person name="Westhof E."/>
            <person name="Wirth B."/>
            <person name="Zeniou-Meyer M."/>
            <person name="Zivanovic Y."/>
            <person name="Bolotin-Fukuhara M."/>
            <person name="Thierry A."/>
            <person name="Bouchier C."/>
            <person name="Caudron B."/>
            <person name="Scarpelli C."/>
            <person name="Gaillardin C."/>
            <person name="Weissenbach J."/>
            <person name="Wincker P."/>
            <person name="Souciet J.-L."/>
        </authorList>
    </citation>
    <scope>NUCLEOTIDE SEQUENCE [LARGE SCALE GENOMIC DNA]</scope>
    <source>
        <strain>CLIB 122 / E 150</strain>
    </source>
</reference>
<proteinExistence type="inferred from homology"/>
<sequence>MSDQVSDMLEKLELQKEKNQAAATEAKVEEVKEDDKKDVKEELNEDDKKVAKEDDKKEDAKEESKEDAEENNLIQTEYEVRVKLADLQADPNSPLYSAKRFEDLGLDENLLKGLYAMKFNKPSKIQEKALPLLLSDPPHNMIGQSQSGTGKTGAFSLTMLSRVDPNLKAVQCICLAPSRELARQTLDVVDEMKKFTDITTHLIVPESTERGQKVTSQILVGTPGSVAGLLQKKQIDAKHVKVFVLDEADNMVDSSMGSTCARIKKYLPSSTQVVLFSATFPESVLDLAGKMCPNPNEIRLKANELNVDAITQLYMDCEDGEEKFKMLEELYSMLTIASSVIFVAQRSTANALYQRMSKNGHKVSLLHSDLSVDERDRLMDDFRFGRSKVLISTNVIARGIDIATVSMVVNYDLPTDKNGKPDPETYLHRIGRTGRFGRSGVSISFVHDEASFEVLDSIQQSLGMTLTQVPTDDIDEVEEIIKKAIKGK</sequence>